<reference key="1">
    <citation type="submission" date="2007-06" db="EMBL/GenBank/DDBJ databases">
        <title>Complete sequence of Sinorhizobium medicae WSM419 chromosome.</title>
        <authorList>
            <consortium name="US DOE Joint Genome Institute"/>
            <person name="Copeland A."/>
            <person name="Lucas S."/>
            <person name="Lapidus A."/>
            <person name="Barry K."/>
            <person name="Glavina del Rio T."/>
            <person name="Dalin E."/>
            <person name="Tice H."/>
            <person name="Pitluck S."/>
            <person name="Chain P."/>
            <person name="Malfatti S."/>
            <person name="Shin M."/>
            <person name="Vergez L."/>
            <person name="Schmutz J."/>
            <person name="Larimer F."/>
            <person name="Land M."/>
            <person name="Hauser L."/>
            <person name="Kyrpides N."/>
            <person name="Mikhailova N."/>
            <person name="Reeve W.G."/>
            <person name="Richardson P."/>
        </authorList>
    </citation>
    <scope>NUCLEOTIDE SEQUENCE [LARGE SCALE GENOMIC DNA]</scope>
    <source>
        <strain>WSM419</strain>
    </source>
</reference>
<feature type="chain" id="PRO_1000062673" description="Acetyl-coenzyme A carboxylase carboxyl transferase subunit alpha">
    <location>
        <begin position="1"/>
        <end position="317"/>
    </location>
</feature>
<feature type="domain" description="CoA carboxyltransferase C-terminal" evidence="2">
    <location>
        <begin position="40"/>
        <end position="293"/>
    </location>
</feature>
<sequence>MHNYLDFEKPISDLEGKILELKKLASEDESVNTSDEIARLEGRVRDAMVEIYSKLSPWQKTQVARHPSRPHFLDYASRLFTEFTPLAGDRNFANDDAIQAGLARFRGAPVAVIGQEKGNDTKSRIKHNFGSPRPEGYRKATRIMEMADRFGLPLITLVDTAGAYPGVNAEERGQAEAIARSTEMCLNVKVPIVTVVIGEGGSGGAIAIATGNRVYMLEHAIYSVISPEGAASILWRDSTRAKEAASNMKITAEDLKSLGVIDGIIPEPIGGGHRDPDAVISRTEAVIGDALKELSARSGDELRSDRRQKYLNIGRNL</sequence>
<gene>
    <name evidence="1" type="primary">accA</name>
    <name type="ordered locus">Smed_2568</name>
</gene>
<comment type="function">
    <text evidence="1">Component of the acetyl coenzyme A carboxylase (ACC) complex. First, biotin carboxylase catalyzes the carboxylation of biotin on its carrier protein (BCCP) and then the CO(2) group is transferred by the carboxyltransferase to acetyl-CoA to form malonyl-CoA.</text>
</comment>
<comment type="catalytic activity">
    <reaction evidence="1">
        <text>N(6)-carboxybiotinyl-L-lysyl-[protein] + acetyl-CoA = N(6)-biotinyl-L-lysyl-[protein] + malonyl-CoA</text>
        <dbReference type="Rhea" id="RHEA:54728"/>
        <dbReference type="Rhea" id="RHEA-COMP:10505"/>
        <dbReference type="Rhea" id="RHEA-COMP:10506"/>
        <dbReference type="ChEBI" id="CHEBI:57288"/>
        <dbReference type="ChEBI" id="CHEBI:57384"/>
        <dbReference type="ChEBI" id="CHEBI:83144"/>
        <dbReference type="ChEBI" id="CHEBI:83145"/>
        <dbReference type="EC" id="2.1.3.15"/>
    </reaction>
</comment>
<comment type="pathway">
    <text evidence="1">Lipid metabolism; malonyl-CoA biosynthesis; malonyl-CoA from acetyl-CoA: step 1/1.</text>
</comment>
<comment type="subunit">
    <text evidence="1">Acetyl-CoA carboxylase is a heterohexamer composed of biotin carboxyl carrier protein (AccB), biotin carboxylase (AccC) and two subunits each of ACCase subunit alpha (AccA) and ACCase subunit beta (AccD).</text>
</comment>
<comment type="subcellular location">
    <subcellularLocation>
        <location evidence="1">Cytoplasm</location>
    </subcellularLocation>
</comment>
<comment type="similarity">
    <text evidence="1">Belongs to the AccA family.</text>
</comment>
<dbReference type="EC" id="2.1.3.15" evidence="1"/>
<dbReference type="EMBL" id="CP000738">
    <property type="protein sequence ID" value="ABR61398.1"/>
    <property type="molecule type" value="Genomic_DNA"/>
</dbReference>
<dbReference type="RefSeq" id="WP_012066789.1">
    <property type="nucleotide sequence ID" value="NC_009636.1"/>
</dbReference>
<dbReference type="RefSeq" id="YP_001328233.1">
    <property type="nucleotide sequence ID" value="NC_009636.1"/>
</dbReference>
<dbReference type="SMR" id="A6UCL8"/>
<dbReference type="STRING" id="366394.Smed_2568"/>
<dbReference type="KEGG" id="smd:Smed_2568"/>
<dbReference type="PATRIC" id="fig|366394.8.peg.5760"/>
<dbReference type="eggNOG" id="COG0825">
    <property type="taxonomic scope" value="Bacteria"/>
</dbReference>
<dbReference type="HOGENOM" id="CLU_015486_0_2_5"/>
<dbReference type="OrthoDB" id="9808023at2"/>
<dbReference type="UniPathway" id="UPA00655">
    <property type="reaction ID" value="UER00711"/>
</dbReference>
<dbReference type="Proteomes" id="UP000001108">
    <property type="component" value="Chromosome"/>
</dbReference>
<dbReference type="GO" id="GO:0009317">
    <property type="term" value="C:acetyl-CoA carboxylase complex"/>
    <property type="evidence" value="ECO:0007669"/>
    <property type="project" value="InterPro"/>
</dbReference>
<dbReference type="GO" id="GO:0003989">
    <property type="term" value="F:acetyl-CoA carboxylase activity"/>
    <property type="evidence" value="ECO:0007669"/>
    <property type="project" value="InterPro"/>
</dbReference>
<dbReference type="GO" id="GO:0005524">
    <property type="term" value="F:ATP binding"/>
    <property type="evidence" value="ECO:0007669"/>
    <property type="project" value="UniProtKB-KW"/>
</dbReference>
<dbReference type="GO" id="GO:0016743">
    <property type="term" value="F:carboxyl- or carbamoyltransferase activity"/>
    <property type="evidence" value="ECO:0007669"/>
    <property type="project" value="UniProtKB-UniRule"/>
</dbReference>
<dbReference type="GO" id="GO:0006633">
    <property type="term" value="P:fatty acid biosynthetic process"/>
    <property type="evidence" value="ECO:0007669"/>
    <property type="project" value="UniProtKB-KW"/>
</dbReference>
<dbReference type="GO" id="GO:2001295">
    <property type="term" value="P:malonyl-CoA biosynthetic process"/>
    <property type="evidence" value="ECO:0007669"/>
    <property type="project" value="UniProtKB-UniRule"/>
</dbReference>
<dbReference type="Gene3D" id="3.90.226.10">
    <property type="entry name" value="2-enoyl-CoA Hydratase, Chain A, domain 1"/>
    <property type="match status" value="1"/>
</dbReference>
<dbReference type="HAMAP" id="MF_00823">
    <property type="entry name" value="AcetylCoA_CT_alpha"/>
    <property type="match status" value="1"/>
</dbReference>
<dbReference type="InterPro" id="IPR001095">
    <property type="entry name" value="Acetyl_CoA_COase_a_su"/>
</dbReference>
<dbReference type="InterPro" id="IPR029045">
    <property type="entry name" value="ClpP/crotonase-like_dom_sf"/>
</dbReference>
<dbReference type="InterPro" id="IPR011763">
    <property type="entry name" value="COA_CT_C"/>
</dbReference>
<dbReference type="NCBIfam" id="TIGR00513">
    <property type="entry name" value="accA"/>
    <property type="match status" value="1"/>
</dbReference>
<dbReference type="NCBIfam" id="NF041504">
    <property type="entry name" value="AccA_sub"/>
    <property type="match status" value="1"/>
</dbReference>
<dbReference type="NCBIfam" id="NF004344">
    <property type="entry name" value="PRK05724.1"/>
    <property type="match status" value="1"/>
</dbReference>
<dbReference type="PANTHER" id="PTHR42853">
    <property type="entry name" value="ACETYL-COENZYME A CARBOXYLASE CARBOXYL TRANSFERASE SUBUNIT ALPHA"/>
    <property type="match status" value="1"/>
</dbReference>
<dbReference type="PANTHER" id="PTHR42853:SF3">
    <property type="entry name" value="ACETYL-COENZYME A CARBOXYLASE CARBOXYL TRANSFERASE SUBUNIT ALPHA, CHLOROPLASTIC"/>
    <property type="match status" value="1"/>
</dbReference>
<dbReference type="Pfam" id="PF03255">
    <property type="entry name" value="ACCA"/>
    <property type="match status" value="1"/>
</dbReference>
<dbReference type="PRINTS" id="PR01069">
    <property type="entry name" value="ACCCTRFRASEA"/>
</dbReference>
<dbReference type="SUPFAM" id="SSF52096">
    <property type="entry name" value="ClpP/crotonase"/>
    <property type="match status" value="1"/>
</dbReference>
<dbReference type="PROSITE" id="PS50989">
    <property type="entry name" value="COA_CT_CTER"/>
    <property type="match status" value="1"/>
</dbReference>
<evidence type="ECO:0000255" key="1">
    <source>
        <dbReference type="HAMAP-Rule" id="MF_00823"/>
    </source>
</evidence>
<evidence type="ECO:0000255" key="2">
    <source>
        <dbReference type="PROSITE-ProRule" id="PRU01137"/>
    </source>
</evidence>
<protein>
    <recommendedName>
        <fullName evidence="1">Acetyl-coenzyme A carboxylase carboxyl transferase subunit alpha</fullName>
        <shortName evidence="1">ACCase subunit alpha</shortName>
        <shortName evidence="1">Acetyl-CoA carboxylase carboxyltransferase subunit alpha</shortName>
        <ecNumber evidence="1">2.1.3.15</ecNumber>
    </recommendedName>
</protein>
<name>ACCA_SINMW</name>
<keyword id="KW-0067">ATP-binding</keyword>
<keyword id="KW-0963">Cytoplasm</keyword>
<keyword id="KW-0275">Fatty acid biosynthesis</keyword>
<keyword id="KW-0276">Fatty acid metabolism</keyword>
<keyword id="KW-0444">Lipid biosynthesis</keyword>
<keyword id="KW-0443">Lipid metabolism</keyword>
<keyword id="KW-0547">Nucleotide-binding</keyword>
<keyword id="KW-0808">Transferase</keyword>
<proteinExistence type="inferred from homology"/>
<accession>A6UCL8</accession>
<organism>
    <name type="scientific">Sinorhizobium medicae (strain WSM419)</name>
    <name type="common">Ensifer medicae</name>
    <dbReference type="NCBI Taxonomy" id="366394"/>
    <lineage>
        <taxon>Bacteria</taxon>
        <taxon>Pseudomonadati</taxon>
        <taxon>Pseudomonadota</taxon>
        <taxon>Alphaproteobacteria</taxon>
        <taxon>Hyphomicrobiales</taxon>
        <taxon>Rhizobiaceae</taxon>
        <taxon>Sinorhizobium/Ensifer group</taxon>
        <taxon>Sinorhizobium</taxon>
    </lineage>
</organism>